<reference key="1">
    <citation type="journal article" date="2008" name="BMC Genomics">
        <title>The missing link: Bordetella petrii is endowed with both the metabolic versatility of environmental bacteria and virulence traits of pathogenic Bordetellae.</title>
        <authorList>
            <person name="Gross R."/>
            <person name="Guzman C.A."/>
            <person name="Sebaihia M."/>
            <person name="Martin dos Santos V.A.P."/>
            <person name="Pieper D.H."/>
            <person name="Koebnik R."/>
            <person name="Lechner M."/>
            <person name="Bartels D."/>
            <person name="Buhrmester J."/>
            <person name="Choudhuri J.V."/>
            <person name="Ebensen T."/>
            <person name="Gaigalat L."/>
            <person name="Herrmann S."/>
            <person name="Khachane A.N."/>
            <person name="Larisch C."/>
            <person name="Link S."/>
            <person name="Linke B."/>
            <person name="Meyer F."/>
            <person name="Mormann S."/>
            <person name="Nakunst D."/>
            <person name="Rueckert C."/>
            <person name="Schneiker-Bekel S."/>
            <person name="Schulze K."/>
            <person name="Voerholter F.-J."/>
            <person name="Yevsa T."/>
            <person name="Engle J.T."/>
            <person name="Goldman W.E."/>
            <person name="Puehler A."/>
            <person name="Goebel U.B."/>
            <person name="Goesmann A."/>
            <person name="Bloecker H."/>
            <person name="Kaiser O."/>
            <person name="Martinez-Arias R."/>
        </authorList>
    </citation>
    <scope>NUCLEOTIDE SEQUENCE [LARGE SCALE GENOMIC DNA]</scope>
    <source>
        <strain>ATCC BAA-461 / DSM 12804 / CCUG 43448</strain>
    </source>
</reference>
<name>RLMH_BORPD</name>
<feature type="chain" id="PRO_0000366566" description="Ribosomal RNA large subunit methyltransferase H">
    <location>
        <begin position="1"/>
        <end position="156"/>
    </location>
</feature>
<feature type="binding site" evidence="1">
    <location>
        <position position="73"/>
    </location>
    <ligand>
        <name>S-adenosyl-L-methionine</name>
        <dbReference type="ChEBI" id="CHEBI:59789"/>
    </ligand>
</feature>
<feature type="binding site" evidence="1">
    <location>
        <position position="104"/>
    </location>
    <ligand>
        <name>S-adenosyl-L-methionine</name>
        <dbReference type="ChEBI" id="CHEBI:59789"/>
    </ligand>
</feature>
<feature type="binding site" evidence="1">
    <location>
        <begin position="123"/>
        <end position="128"/>
    </location>
    <ligand>
        <name>S-adenosyl-L-methionine</name>
        <dbReference type="ChEBI" id="CHEBI:59789"/>
    </ligand>
</feature>
<evidence type="ECO:0000255" key="1">
    <source>
        <dbReference type="HAMAP-Rule" id="MF_00658"/>
    </source>
</evidence>
<accession>A9ITN7</accession>
<organism>
    <name type="scientific">Bordetella petrii (strain ATCC BAA-461 / DSM 12804 / CCUG 43448)</name>
    <dbReference type="NCBI Taxonomy" id="340100"/>
    <lineage>
        <taxon>Bacteria</taxon>
        <taxon>Pseudomonadati</taxon>
        <taxon>Pseudomonadota</taxon>
        <taxon>Betaproteobacteria</taxon>
        <taxon>Burkholderiales</taxon>
        <taxon>Alcaligenaceae</taxon>
        <taxon>Bordetella</taxon>
    </lineage>
</organism>
<dbReference type="EC" id="2.1.1.177" evidence="1"/>
<dbReference type="EMBL" id="AM902716">
    <property type="protein sequence ID" value="CAP43446.1"/>
    <property type="molecule type" value="Genomic_DNA"/>
</dbReference>
<dbReference type="SMR" id="A9ITN7"/>
<dbReference type="STRING" id="94624.Bpet3104"/>
<dbReference type="KEGG" id="bpt:Bpet3104"/>
<dbReference type="eggNOG" id="COG1576">
    <property type="taxonomic scope" value="Bacteria"/>
</dbReference>
<dbReference type="Proteomes" id="UP000001225">
    <property type="component" value="Chromosome"/>
</dbReference>
<dbReference type="GO" id="GO:0005737">
    <property type="term" value="C:cytoplasm"/>
    <property type="evidence" value="ECO:0007669"/>
    <property type="project" value="UniProtKB-SubCell"/>
</dbReference>
<dbReference type="GO" id="GO:0070038">
    <property type="term" value="F:rRNA (pseudouridine-N3-)-methyltransferase activity"/>
    <property type="evidence" value="ECO:0007669"/>
    <property type="project" value="UniProtKB-UniRule"/>
</dbReference>
<dbReference type="CDD" id="cd18081">
    <property type="entry name" value="RlmH-like"/>
    <property type="match status" value="1"/>
</dbReference>
<dbReference type="Gene3D" id="3.40.1280.10">
    <property type="match status" value="1"/>
</dbReference>
<dbReference type="HAMAP" id="MF_00658">
    <property type="entry name" value="23SrRNA_methyltr_H"/>
    <property type="match status" value="1"/>
</dbReference>
<dbReference type="InterPro" id="IPR029028">
    <property type="entry name" value="Alpha/beta_knot_MTases"/>
</dbReference>
<dbReference type="InterPro" id="IPR003742">
    <property type="entry name" value="RlmH-like"/>
</dbReference>
<dbReference type="InterPro" id="IPR029026">
    <property type="entry name" value="tRNA_m1G_MTases_N"/>
</dbReference>
<dbReference type="NCBIfam" id="NF000986">
    <property type="entry name" value="PRK00103.1-4"/>
    <property type="match status" value="1"/>
</dbReference>
<dbReference type="PANTHER" id="PTHR33603">
    <property type="entry name" value="METHYLTRANSFERASE"/>
    <property type="match status" value="1"/>
</dbReference>
<dbReference type="PANTHER" id="PTHR33603:SF1">
    <property type="entry name" value="RIBOSOMAL RNA LARGE SUBUNIT METHYLTRANSFERASE H"/>
    <property type="match status" value="1"/>
</dbReference>
<dbReference type="Pfam" id="PF02590">
    <property type="entry name" value="SPOUT_MTase"/>
    <property type="match status" value="1"/>
</dbReference>
<dbReference type="PIRSF" id="PIRSF004505">
    <property type="entry name" value="MT_bac"/>
    <property type="match status" value="1"/>
</dbReference>
<dbReference type="SUPFAM" id="SSF75217">
    <property type="entry name" value="alpha/beta knot"/>
    <property type="match status" value="1"/>
</dbReference>
<proteinExistence type="inferred from homology"/>
<comment type="function">
    <text evidence="1">Specifically methylates the pseudouridine at position 1915 (m3Psi1915) in 23S rRNA.</text>
</comment>
<comment type="catalytic activity">
    <reaction evidence="1">
        <text>pseudouridine(1915) in 23S rRNA + S-adenosyl-L-methionine = N(3)-methylpseudouridine(1915) in 23S rRNA + S-adenosyl-L-homocysteine + H(+)</text>
        <dbReference type="Rhea" id="RHEA:42752"/>
        <dbReference type="Rhea" id="RHEA-COMP:10221"/>
        <dbReference type="Rhea" id="RHEA-COMP:10222"/>
        <dbReference type="ChEBI" id="CHEBI:15378"/>
        <dbReference type="ChEBI" id="CHEBI:57856"/>
        <dbReference type="ChEBI" id="CHEBI:59789"/>
        <dbReference type="ChEBI" id="CHEBI:65314"/>
        <dbReference type="ChEBI" id="CHEBI:74486"/>
        <dbReference type="EC" id="2.1.1.177"/>
    </reaction>
</comment>
<comment type="subunit">
    <text evidence="1">Homodimer.</text>
</comment>
<comment type="subcellular location">
    <subcellularLocation>
        <location evidence="1">Cytoplasm</location>
    </subcellularLocation>
</comment>
<comment type="similarity">
    <text evidence="1">Belongs to the RNA methyltransferase RlmH family.</text>
</comment>
<keyword id="KW-0963">Cytoplasm</keyword>
<keyword id="KW-0489">Methyltransferase</keyword>
<keyword id="KW-0698">rRNA processing</keyword>
<keyword id="KW-0949">S-adenosyl-L-methionine</keyword>
<keyword id="KW-0808">Transferase</keyword>
<sequence>MKLIVIAVGNRMPAWVETAWDDYAKRLPPDCALELREIKPEPRTTGKTPAQMMAAEARRIEAAIPGGALRLALDERGRDLTTMALSQRLEQWRAGGRDVVFLVGGPDGLDDALKSACDGQIRLSSLTLPHPMVRVVLAEQLYRAWAILANHPYHRA</sequence>
<protein>
    <recommendedName>
        <fullName evidence="1">Ribosomal RNA large subunit methyltransferase H</fullName>
        <ecNumber evidence="1">2.1.1.177</ecNumber>
    </recommendedName>
    <alternativeName>
        <fullName evidence="1">23S rRNA (pseudouridine1915-N3)-methyltransferase</fullName>
    </alternativeName>
    <alternativeName>
        <fullName evidence="1">23S rRNA m3Psi1915 methyltransferase</fullName>
    </alternativeName>
    <alternativeName>
        <fullName evidence="1">rRNA (pseudouridine-N3-)-methyltransferase RlmH</fullName>
    </alternativeName>
</protein>
<gene>
    <name evidence="1" type="primary">rlmH</name>
    <name type="ordered locus">Bpet3104</name>
</gene>